<evidence type="ECO:0000255" key="1">
    <source>
        <dbReference type="HAMAP-Rule" id="MF_00031"/>
    </source>
</evidence>
<feature type="chain" id="PRO_1000090348" description="Holliday junction branch migration complex subunit RuvA">
    <location>
        <begin position="1"/>
        <end position="200"/>
    </location>
</feature>
<feature type="region of interest" description="Domain I" evidence="1">
    <location>
        <begin position="1"/>
        <end position="64"/>
    </location>
</feature>
<feature type="region of interest" description="Domain II" evidence="1">
    <location>
        <begin position="65"/>
        <end position="143"/>
    </location>
</feature>
<feature type="region of interest" description="Flexible linker" evidence="1">
    <location>
        <begin position="144"/>
        <end position="154"/>
    </location>
</feature>
<feature type="region of interest" description="Domain III" evidence="1">
    <location>
        <begin position="154"/>
        <end position="200"/>
    </location>
</feature>
<accession>B4SCR7</accession>
<dbReference type="EMBL" id="CP001110">
    <property type="protein sequence ID" value="ACF42751.1"/>
    <property type="molecule type" value="Genomic_DNA"/>
</dbReference>
<dbReference type="RefSeq" id="WP_012507246.1">
    <property type="nucleotide sequence ID" value="NC_011060.1"/>
</dbReference>
<dbReference type="SMR" id="B4SCR7"/>
<dbReference type="STRING" id="324925.Ppha_0425"/>
<dbReference type="KEGG" id="pph:Ppha_0425"/>
<dbReference type="eggNOG" id="COG0632">
    <property type="taxonomic scope" value="Bacteria"/>
</dbReference>
<dbReference type="HOGENOM" id="CLU_087936_0_0_10"/>
<dbReference type="OrthoDB" id="5293449at2"/>
<dbReference type="Proteomes" id="UP000002724">
    <property type="component" value="Chromosome"/>
</dbReference>
<dbReference type="GO" id="GO:0005737">
    <property type="term" value="C:cytoplasm"/>
    <property type="evidence" value="ECO:0007669"/>
    <property type="project" value="UniProtKB-SubCell"/>
</dbReference>
<dbReference type="GO" id="GO:0009379">
    <property type="term" value="C:Holliday junction helicase complex"/>
    <property type="evidence" value="ECO:0007669"/>
    <property type="project" value="InterPro"/>
</dbReference>
<dbReference type="GO" id="GO:0048476">
    <property type="term" value="C:Holliday junction resolvase complex"/>
    <property type="evidence" value="ECO:0007669"/>
    <property type="project" value="UniProtKB-UniRule"/>
</dbReference>
<dbReference type="GO" id="GO:0005524">
    <property type="term" value="F:ATP binding"/>
    <property type="evidence" value="ECO:0007669"/>
    <property type="project" value="InterPro"/>
</dbReference>
<dbReference type="GO" id="GO:0000400">
    <property type="term" value="F:four-way junction DNA binding"/>
    <property type="evidence" value="ECO:0007669"/>
    <property type="project" value="UniProtKB-UniRule"/>
</dbReference>
<dbReference type="GO" id="GO:0009378">
    <property type="term" value="F:four-way junction helicase activity"/>
    <property type="evidence" value="ECO:0007669"/>
    <property type="project" value="InterPro"/>
</dbReference>
<dbReference type="GO" id="GO:0006310">
    <property type="term" value="P:DNA recombination"/>
    <property type="evidence" value="ECO:0007669"/>
    <property type="project" value="UniProtKB-UniRule"/>
</dbReference>
<dbReference type="GO" id="GO:0006281">
    <property type="term" value="P:DNA repair"/>
    <property type="evidence" value="ECO:0007669"/>
    <property type="project" value="UniProtKB-UniRule"/>
</dbReference>
<dbReference type="CDD" id="cd14332">
    <property type="entry name" value="UBA_RuvA_C"/>
    <property type="match status" value="1"/>
</dbReference>
<dbReference type="Gene3D" id="1.10.150.20">
    <property type="entry name" value="5' to 3' exonuclease, C-terminal subdomain"/>
    <property type="match status" value="1"/>
</dbReference>
<dbReference type="Gene3D" id="1.10.8.10">
    <property type="entry name" value="DNA helicase RuvA subunit, C-terminal domain"/>
    <property type="match status" value="1"/>
</dbReference>
<dbReference type="Gene3D" id="2.40.50.140">
    <property type="entry name" value="Nucleic acid-binding proteins"/>
    <property type="match status" value="1"/>
</dbReference>
<dbReference type="HAMAP" id="MF_00031">
    <property type="entry name" value="DNA_HJ_migration_RuvA"/>
    <property type="match status" value="1"/>
</dbReference>
<dbReference type="InterPro" id="IPR013849">
    <property type="entry name" value="DNA_helicase_Holl-junc_RuvA_I"/>
</dbReference>
<dbReference type="InterPro" id="IPR003583">
    <property type="entry name" value="Hlx-hairpin-Hlx_DNA-bd_motif"/>
</dbReference>
<dbReference type="InterPro" id="IPR012340">
    <property type="entry name" value="NA-bd_OB-fold"/>
</dbReference>
<dbReference type="InterPro" id="IPR000085">
    <property type="entry name" value="RuvA"/>
</dbReference>
<dbReference type="InterPro" id="IPR010994">
    <property type="entry name" value="RuvA_2-like"/>
</dbReference>
<dbReference type="InterPro" id="IPR011114">
    <property type="entry name" value="RuvA_C"/>
</dbReference>
<dbReference type="InterPro" id="IPR036267">
    <property type="entry name" value="RuvA_C_sf"/>
</dbReference>
<dbReference type="NCBIfam" id="TIGR00084">
    <property type="entry name" value="ruvA"/>
    <property type="match status" value="1"/>
</dbReference>
<dbReference type="Pfam" id="PF14520">
    <property type="entry name" value="HHH_5"/>
    <property type="match status" value="1"/>
</dbReference>
<dbReference type="Pfam" id="PF07499">
    <property type="entry name" value="RuvA_C"/>
    <property type="match status" value="1"/>
</dbReference>
<dbReference type="Pfam" id="PF01330">
    <property type="entry name" value="RuvA_N"/>
    <property type="match status" value="1"/>
</dbReference>
<dbReference type="SMART" id="SM00278">
    <property type="entry name" value="HhH1"/>
    <property type="match status" value="2"/>
</dbReference>
<dbReference type="SUPFAM" id="SSF46929">
    <property type="entry name" value="DNA helicase RuvA subunit, C-terminal domain"/>
    <property type="match status" value="1"/>
</dbReference>
<dbReference type="SUPFAM" id="SSF50249">
    <property type="entry name" value="Nucleic acid-binding proteins"/>
    <property type="match status" value="1"/>
</dbReference>
<dbReference type="SUPFAM" id="SSF47781">
    <property type="entry name" value="RuvA domain 2-like"/>
    <property type="match status" value="1"/>
</dbReference>
<proteinExistence type="inferred from homology"/>
<name>RUVA_PELPB</name>
<protein>
    <recommendedName>
        <fullName evidence="1">Holliday junction branch migration complex subunit RuvA</fullName>
    </recommendedName>
</protein>
<keyword id="KW-0963">Cytoplasm</keyword>
<keyword id="KW-0227">DNA damage</keyword>
<keyword id="KW-0233">DNA recombination</keyword>
<keyword id="KW-0234">DNA repair</keyword>
<keyword id="KW-0238">DNA-binding</keyword>
<keyword id="KW-1185">Reference proteome</keyword>
<sequence>MFAYFRGKLTSVLPEEVVVEVSGIAYQFLISAATHRQLPEQGSEVFLFSHLVVREDLLQLYGFSGEEERQLFRLLLLTTGVGPKLALALLSGLSVQDIHDAILTNTPERLYGITGVGKKTAARIILELRDKVLKLSPVSALASPARLSSTLLRDDAVNALVTLGFSRIIVQKAVVAILEQNPGLTVEEVIKAALVSIHNS</sequence>
<gene>
    <name evidence="1" type="primary">ruvA</name>
    <name type="ordered locus">Ppha_0425</name>
</gene>
<reference key="1">
    <citation type="submission" date="2008-06" db="EMBL/GenBank/DDBJ databases">
        <title>Complete sequence of Pelodictyon phaeoclathratiforme BU-1.</title>
        <authorList>
            <consortium name="US DOE Joint Genome Institute"/>
            <person name="Lucas S."/>
            <person name="Copeland A."/>
            <person name="Lapidus A."/>
            <person name="Glavina del Rio T."/>
            <person name="Dalin E."/>
            <person name="Tice H."/>
            <person name="Bruce D."/>
            <person name="Goodwin L."/>
            <person name="Pitluck S."/>
            <person name="Schmutz J."/>
            <person name="Larimer F."/>
            <person name="Land M."/>
            <person name="Hauser L."/>
            <person name="Kyrpides N."/>
            <person name="Mikhailova N."/>
            <person name="Liu Z."/>
            <person name="Li T."/>
            <person name="Zhao F."/>
            <person name="Overmann J."/>
            <person name="Bryant D.A."/>
            <person name="Richardson P."/>
        </authorList>
    </citation>
    <scope>NUCLEOTIDE SEQUENCE [LARGE SCALE GENOMIC DNA]</scope>
    <source>
        <strain>DSM 5477 / BU-1</strain>
    </source>
</reference>
<comment type="function">
    <text evidence="1">The RuvA-RuvB-RuvC complex processes Holliday junction (HJ) DNA during genetic recombination and DNA repair, while the RuvA-RuvB complex plays an important role in the rescue of blocked DNA replication forks via replication fork reversal (RFR). RuvA specifically binds to HJ cruciform DNA, conferring on it an open structure. The RuvB hexamer acts as an ATP-dependent pump, pulling dsDNA into and through the RuvAB complex. HJ branch migration allows RuvC to scan DNA until it finds its consensus sequence, where it cleaves and resolves the cruciform DNA.</text>
</comment>
<comment type="subunit">
    <text evidence="1">Homotetramer. Forms an RuvA(8)-RuvB(12)-Holliday junction (HJ) complex. HJ DNA is sandwiched between 2 RuvA tetramers; dsDNA enters through RuvA and exits via RuvB. An RuvB hexamer assembles on each DNA strand where it exits the tetramer. Each RuvB hexamer is contacted by two RuvA subunits (via domain III) on 2 adjacent RuvB subunits; this complex drives branch migration. In the full resolvosome a probable DNA-RuvA(4)-RuvB(12)-RuvC(2) complex forms which resolves the HJ.</text>
</comment>
<comment type="subcellular location">
    <subcellularLocation>
        <location evidence="1">Cytoplasm</location>
    </subcellularLocation>
</comment>
<comment type="domain">
    <text evidence="1">Has three domains with a flexible linker between the domains II and III and assumes an 'L' shape. Domain III is highly mobile and contacts RuvB.</text>
</comment>
<comment type="similarity">
    <text evidence="1">Belongs to the RuvA family.</text>
</comment>
<organism>
    <name type="scientific">Pelodictyon phaeoclathratiforme (strain DSM 5477 / BU-1)</name>
    <dbReference type="NCBI Taxonomy" id="324925"/>
    <lineage>
        <taxon>Bacteria</taxon>
        <taxon>Pseudomonadati</taxon>
        <taxon>Chlorobiota</taxon>
        <taxon>Chlorobiia</taxon>
        <taxon>Chlorobiales</taxon>
        <taxon>Chlorobiaceae</taxon>
        <taxon>Chlorobium/Pelodictyon group</taxon>
        <taxon>Pelodictyon</taxon>
    </lineage>
</organism>